<sequence>MGCKISTEFCSDNPVGSISTSKVHPTDLSTPSYAIKPVEFYEEPLKDDQLFYKVALAKKEYREKEKDKKEQLSSNRRVSLQVEPNKLPIPLTRSSSLSSIMENRPPSGISNSSFIRSRNTASRRFTIDTSRAKSNQYVVSLCSKKIGIIEYPDGRSDKQPCDVYWHNVVLSDMNKIVTSPQSRVNKFPGMTELAKKISLTHSISSMQKLFPDEYAFYPNSWFLPAHLADFHAFYRKAQALGKTEMWFIVKPDEGAQGTGIYLINSPNQIRNVDQRQLVQEYVADPLLMNDKLKFDFRVYGVIKSINPLSIYVAREGMARFCTEKYEKPDSSNFKNLYAHLTNYSLNKANEAYVHSNTLQDQTRGSKRLLSTVFHQLESRGVKTKRLWHDIKLILVKTTLAMLPEIMLHYEHHFYDSTGPQCFQIMGFDVMIREDGTPILLEVNAAPSLTADHIVPHPGRTLLEGGQRVRSIVDEVIKIPLVRDTLLLVLGLMEEEYQNNSLKGETKSLDDMQTIKQRRKPHLSEIFPTRYGAHSGHLLFLDKAMYIYMQFVQLRSNVNITNAGLKQFVRKCNLIDIIPVVHVDAKVSEINYYFTGEKRTNGNGLPFHAFLMFLFFIAEKKFVLENDLLSKVQRLLSFCDMSLRRYGVRSARLRRAEVDSTIGNVEIYMLPSRMARNRSGTNGRKQNFTDDNNNPNSFAHLPKINERL</sequence>
<feature type="chain" id="PRO_0000447857" description="Tubulin polyglutamylase ttll-11">
    <location>
        <begin position="1"/>
        <end position="707"/>
    </location>
</feature>
<feature type="domain" description="TTL" evidence="2">
    <location>
        <begin position="124"/>
        <end position="488"/>
    </location>
</feature>
<feature type="region of interest" description="Disordered" evidence="3">
    <location>
        <begin position="675"/>
        <end position="707"/>
    </location>
</feature>
<feature type="compositionally biased region" description="Polar residues" evidence="3">
    <location>
        <begin position="677"/>
        <end position="696"/>
    </location>
</feature>
<feature type="binding site" evidence="1">
    <location>
        <begin position="279"/>
        <end position="282"/>
    </location>
    <ligand>
        <name>ATP</name>
        <dbReference type="ChEBI" id="CHEBI:30616"/>
    </ligand>
</feature>
<feature type="binding site" evidence="1">
    <location>
        <position position="293"/>
    </location>
    <ligand>
        <name>ATP</name>
        <dbReference type="ChEBI" id="CHEBI:30616"/>
    </ligand>
</feature>
<feature type="binding site" evidence="1">
    <location>
        <position position="295"/>
    </location>
    <ligand>
        <name>ATP</name>
        <dbReference type="ChEBI" id="CHEBI:30616"/>
    </ligand>
</feature>
<feature type="splice variant" id="VSP_060273" description="In isoform a." evidence="7">
    <location>
        <begin position="1"/>
        <end position="100"/>
    </location>
</feature>
<feature type="mutagenesis site" description="In tm4059; loss of tubulin glutamylation in male CEM and CEP cilia. Defects in cilia axoneme structure. Release of extracellular vesicles via cilia is reduced. Abnormal accumulation of pkd-2 in cilia and dendrites of male CEM, HOB and RnB neurons. Decreases kinesin klp-6 velocity in male CEM cilia. Normal klp-6 and osm-3 velocity is restored in a ccpp-1 mutant background. No defect in polar spindle formation in dividing embryonic cells, cilia-dependent osmotic avoidance and in male mating efficiency." evidence="5 6">
    <location>
        <begin position="191"/>
        <end position="707"/>
    </location>
</feature>
<proteinExistence type="evidence at protein level"/>
<dbReference type="EC" id="6.-.-.-" evidence="8 9"/>
<dbReference type="EMBL" id="BX284604">
    <property type="protein sequence ID" value="CCD68978.2"/>
    <property type="molecule type" value="Genomic_DNA"/>
</dbReference>
<dbReference type="EMBL" id="BX284604">
    <property type="protein sequence ID" value="CCD68979.1"/>
    <property type="molecule type" value="Genomic_DNA"/>
</dbReference>
<dbReference type="RefSeq" id="NP_001367737.1">
    <molecule id="H2KZM9-2"/>
    <property type="nucleotide sequence ID" value="NM_001380378.1"/>
</dbReference>
<dbReference type="RefSeq" id="NP_741471.2">
    <molecule id="H2KZM9-1"/>
    <property type="nucleotide sequence ID" value="NM_171405.7"/>
</dbReference>
<dbReference type="RefSeq" id="NP_741472.2">
    <property type="nucleotide sequence ID" value="NM_171406.2"/>
</dbReference>
<dbReference type="SMR" id="H2KZM9"/>
<dbReference type="FunCoup" id="H2KZM9">
    <property type="interactions" value="92"/>
</dbReference>
<dbReference type="STRING" id="6239.H23L24.3b.1"/>
<dbReference type="PaxDb" id="6239-H23L24.3b"/>
<dbReference type="EnsemblMetazoa" id="H23L24.3a.1">
    <molecule id="H2KZM9-2"/>
    <property type="protein sequence ID" value="H23L24.3a.1"/>
    <property type="gene ID" value="WBGene00019230"/>
</dbReference>
<dbReference type="EnsemblMetazoa" id="H23L24.3b.1">
    <molecule id="H2KZM9-1"/>
    <property type="protein sequence ID" value="H23L24.3b.1"/>
    <property type="gene ID" value="WBGene00019230"/>
</dbReference>
<dbReference type="GeneID" id="177677"/>
<dbReference type="KEGG" id="cel:CELE_H23L24.3"/>
<dbReference type="UCSC" id="H23L24.3b">
    <property type="organism name" value="c. elegans"/>
</dbReference>
<dbReference type="AGR" id="WB:WBGene00019230"/>
<dbReference type="CTD" id="177677"/>
<dbReference type="WormBase" id="H23L24.3a">
    <molecule id="H2KZM9-2"/>
    <property type="protein sequence ID" value="CE31706"/>
    <property type="gene ID" value="WBGene00019230"/>
    <property type="gene designation" value="ttll-11"/>
</dbReference>
<dbReference type="WormBase" id="H23L24.3b">
    <molecule id="H2KZM9-1"/>
    <property type="protein sequence ID" value="CE34905"/>
    <property type="gene ID" value="WBGene00019230"/>
    <property type="gene designation" value="ttll-11"/>
</dbReference>
<dbReference type="eggNOG" id="KOG2158">
    <property type="taxonomic scope" value="Eukaryota"/>
</dbReference>
<dbReference type="GeneTree" id="ENSGT00940000156689"/>
<dbReference type="HOGENOM" id="CLU_010131_6_1_1"/>
<dbReference type="InParanoid" id="H2KZM9"/>
<dbReference type="OMA" id="CDIYWHS"/>
<dbReference type="OrthoDB" id="202825at2759"/>
<dbReference type="PhylomeDB" id="H2KZM9"/>
<dbReference type="PRO" id="PR:H2KZM9"/>
<dbReference type="Proteomes" id="UP000001940">
    <property type="component" value="Chromosome IV"/>
</dbReference>
<dbReference type="Bgee" id="WBGene00019230">
    <property type="expression patterns" value="Expressed in larva and 3 other cell types or tissues"/>
</dbReference>
<dbReference type="GO" id="GO:0030424">
    <property type="term" value="C:axon"/>
    <property type="evidence" value="ECO:0007669"/>
    <property type="project" value="UniProtKB-SubCell"/>
</dbReference>
<dbReference type="GO" id="GO:0036064">
    <property type="term" value="C:ciliary basal body"/>
    <property type="evidence" value="ECO:0000318"/>
    <property type="project" value="GO_Central"/>
</dbReference>
<dbReference type="GO" id="GO:0030425">
    <property type="term" value="C:dendrite"/>
    <property type="evidence" value="ECO:0007669"/>
    <property type="project" value="UniProtKB-SubCell"/>
</dbReference>
<dbReference type="GO" id="GO:0043204">
    <property type="term" value="C:perikaryon"/>
    <property type="evidence" value="ECO:0007669"/>
    <property type="project" value="UniProtKB-SubCell"/>
</dbReference>
<dbReference type="GO" id="GO:0005524">
    <property type="term" value="F:ATP binding"/>
    <property type="evidence" value="ECO:0007669"/>
    <property type="project" value="UniProtKB-KW"/>
</dbReference>
<dbReference type="GO" id="GO:0106437">
    <property type="term" value="F:protein-glutamic acid ligase activity, initiating"/>
    <property type="evidence" value="ECO:0007669"/>
    <property type="project" value="RHEA"/>
</dbReference>
<dbReference type="GO" id="GO:0015631">
    <property type="term" value="F:tubulin binding"/>
    <property type="evidence" value="ECO:0000318"/>
    <property type="project" value="GO_Central"/>
</dbReference>
<dbReference type="GO" id="GO:0070740">
    <property type="term" value="F:tubulin-glutamic acid ligase activity"/>
    <property type="evidence" value="ECO:0000315"/>
    <property type="project" value="UniProtKB"/>
</dbReference>
<dbReference type="GO" id="GO:0000226">
    <property type="term" value="P:microtubule cytoskeleton organization"/>
    <property type="evidence" value="ECO:0000318"/>
    <property type="project" value="GO_Central"/>
</dbReference>
<dbReference type="GO" id="GO:0018095">
    <property type="term" value="P:protein polyglutamylation"/>
    <property type="evidence" value="ECO:0000315"/>
    <property type="project" value="UniProtKB"/>
</dbReference>
<dbReference type="GO" id="GO:0034606">
    <property type="term" value="P:response to hermaphrodite contact"/>
    <property type="evidence" value="ECO:0000316"/>
    <property type="project" value="UniProtKB"/>
</dbReference>
<dbReference type="Gene3D" id="3.30.470.20">
    <property type="entry name" value="ATP-grasp fold, B domain"/>
    <property type="match status" value="1"/>
</dbReference>
<dbReference type="InterPro" id="IPR004344">
    <property type="entry name" value="TTL/TTLL_fam"/>
</dbReference>
<dbReference type="PANTHER" id="PTHR12241">
    <property type="entry name" value="TUBULIN POLYGLUTAMYLASE"/>
    <property type="match status" value="1"/>
</dbReference>
<dbReference type="PANTHER" id="PTHR12241:SF154">
    <property type="entry name" value="TUBULIN POLYGLUTAMYLASE TTLL11"/>
    <property type="match status" value="1"/>
</dbReference>
<dbReference type="Pfam" id="PF03133">
    <property type="entry name" value="TTL"/>
    <property type="match status" value="1"/>
</dbReference>
<dbReference type="SUPFAM" id="SSF56059">
    <property type="entry name" value="Glutathione synthetase ATP-binding domain-like"/>
    <property type="match status" value="1"/>
</dbReference>
<dbReference type="PROSITE" id="PS51221">
    <property type="entry name" value="TTL"/>
    <property type="match status" value="1"/>
</dbReference>
<accession>H2KZM9</accession>
<accession>Q9N5L6</accession>
<reference evidence="10" key="1">
    <citation type="journal article" date="1998" name="Science">
        <title>Genome sequence of the nematode C. elegans: a platform for investigating biology.</title>
        <authorList>
            <consortium name="The C. elegans sequencing consortium"/>
        </authorList>
    </citation>
    <scope>NUCLEOTIDE SEQUENCE [LARGE SCALE GENOMIC DNA]</scope>
    <source>
        <strain evidence="10">Bristol N2</strain>
    </source>
</reference>
<reference evidence="7" key="2">
    <citation type="journal article" date="2010" name="J. Biol. Chem.">
        <title>Identification of tubulin deglutamylase among Caenorhabditis elegans and mammalian cytosolic carboxypeptidases (CCPs).</title>
        <authorList>
            <person name="Kimura Y."/>
            <person name="Kurabe N."/>
            <person name="Ikegami K."/>
            <person name="Tsutsumi K."/>
            <person name="Konishi Y."/>
            <person name="Kaplan O.I."/>
            <person name="Kunitomo H."/>
            <person name="Iino Y."/>
            <person name="Blacque O.E."/>
            <person name="Setou M."/>
        </authorList>
    </citation>
    <scope>SUBCELLULAR LOCATION</scope>
    <scope>TISSUE SPECIFICITY</scope>
</reference>
<reference evidence="7" key="3">
    <citation type="journal article" date="2016" name="Biol. Open">
        <title>Caenorhabditis elegans glutamylating enzymes function redundantly in male mating.</title>
        <authorList>
            <person name="Chawla D.G."/>
            <person name="Shah R.V."/>
            <person name="Barth Z.K."/>
            <person name="Lee J.D."/>
            <person name="Badecker K.E."/>
            <person name="Naik A."/>
            <person name="Brewster M.M."/>
            <person name="Salmon T.P."/>
            <person name="Peel N."/>
        </authorList>
    </citation>
    <scope>FUNCTION</scope>
    <scope>CATALYTIC ACTIVITY</scope>
    <scope>DEVELOPMENTAL STAGE</scope>
    <scope>MUTAGENESIS OF 191-THR--LEU-707</scope>
</reference>
<reference evidence="7" key="4">
    <citation type="journal article" date="2017" name="Curr. Biol.">
        <title>Glutamylation Regulates Transport, Specializes Function, and Sculpts the Structure of Cilia.</title>
        <authorList>
            <person name="O'Hagan R."/>
            <person name="Silva M."/>
            <person name="Nguyen K.C.Q."/>
            <person name="Zhang W."/>
            <person name="Bellotti S."/>
            <person name="Ramadan Y.H."/>
            <person name="Hall D.H."/>
            <person name="Barr M.M."/>
        </authorList>
    </citation>
    <scope>FUNCTION (ISOFORMS A AND B)</scope>
    <scope>CATALYTIC ACTIVITY</scope>
    <scope>SUBCELLULAR LOCATION</scope>
    <scope>TISSUE SPECIFICITY (ISOFORMS A AND B)</scope>
    <scope>MUTAGENESIS OF 191-THR--LEU-707</scope>
</reference>
<name>TTL11_CAEEL</name>
<comment type="function">
    <text evidence="5 6">Polyglutamylase which preferentially modifies tubulin (PubMed:27635036, PubMed:29129530). Involved in the side-chain initiation step of the polyglutamylation reaction (PubMed:27635036, PubMed:29129530). By controlling tubulin glutamylation, regulates ciliary specialization and motor-based transport. Promotes the formation of A and B tubule singlets by splaying microtubule doublets in cilia (PubMed:29129530). Together with ttll-4 and 5, required for male mating (PubMed:27635036).</text>
</comment>
<comment type="function">
    <molecule>Isoform a</molecule>
    <text evidence="6">Specifically promotes tubulin glutamylation in a subset of ciliated neurons including amphid, phasmid, CEP and RnA neurons.</text>
</comment>
<comment type="function">
    <molecule>Isoform b</molecule>
    <text evidence="6">Specifically promotes tubulin glutamylation in male ciliated CEM, HOB and RnB neurons that release bioactive extracellular vesicles (PubMed:29129530). Regulates the localization of TRP channel pdk-2 in male CEM, HOB and RnB neurons (PubMed:29129530). Regulates the environmental release of bioactive extracellular vesicles in cilia (PubMed:29129530).</text>
</comment>
<comment type="catalytic activity">
    <reaction evidence="6">
        <text>L-glutamyl-[protein] + L-glutamate + ATP = gamma-L-glutamyl-L-glutamyl-[protein] + ADP + phosphate + H(+)</text>
        <dbReference type="Rhea" id="RHEA:60144"/>
        <dbReference type="Rhea" id="RHEA-COMP:10208"/>
        <dbReference type="Rhea" id="RHEA-COMP:15517"/>
        <dbReference type="ChEBI" id="CHEBI:15378"/>
        <dbReference type="ChEBI" id="CHEBI:29973"/>
        <dbReference type="ChEBI" id="CHEBI:29985"/>
        <dbReference type="ChEBI" id="CHEBI:30616"/>
        <dbReference type="ChEBI" id="CHEBI:43474"/>
        <dbReference type="ChEBI" id="CHEBI:143622"/>
        <dbReference type="ChEBI" id="CHEBI:456216"/>
    </reaction>
    <physiologicalReaction direction="left-to-right" evidence="6">
        <dbReference type="Rhea" id="RHEA:60145"/>
    </physiologicalReaction>
</comment>
<comment type="subcellular location">
    <subcellularLocation>
        <location evidence="4 6">Cell projection</location>
        <location evidence="4 6">Axon</location>
    </subcellularLocation>
    <subcellularLocation>
        <location evidence="6">Perikaryon</location>
    </subcellularLocation>
    <subcellularLocation>
        <location evidence="6">Cell projection</location>
        <location evidence="6">Dendrite</location>
    </subcellularLocation>
    <subcellularLocation>
        <location evidence="4">Cell projection</location>
        <location evidence="4">Cilium</location>
    </subcellularLocation>
    <subcellularLocation>
        <location evidence="6">Extracellular vesicle</location>
    </subcellularLocation>
</comment>
<comment type="alternative products">
    <event type="alternative splicing"/>
    <isoform>
        <id>H2KZM9-1</id>
        <name evidence="12">b</name>
        <sequence type="displayed"/>
    </isoform>
    <isoform>
        <id>H2KZM9-2</id>
        <name evidence="11">a</name>
        <sequence type="described" ref="VSP_060273"/>
    </isoform>
</comment>
<comment type="tissue specificity">
    <text evidence="4 6">Expressed in amphid sensory neurons (PubMed:20519502, PubMed:29129530). Weakly expressed in body wall muscles (PubMed:20519502). Isoform a: Specifically expressed in ciliated sensory neurons in the head, including the IL1s, OLQ, head CEP, and amphid neurons. In the male tail, expressed in HOA, RnA, and phasmid neurons (PubMed:29129530). Isoform b: Specifically expressed in male and hermaphrodite IL2 ciliated sensory neurons, and in male-specific CEM, HOB and RnB ciliated sensory neurons (PubMed:29129530).</text>
</comment>
<comment type="developmental stage">
    <text evidence="5">Expressed in embryos and adults.</text>
</comment>
<comment type="similarity">
    <text evidence="7">Belongs to the tubulin--tyrosine ligase family.</text>
</comment>
<protein>
    <recommendedName>
        <fullName evidence="7">Tubulin polyglutamylase ttll-11</fullName>
        <ecNumber evidence="8 9">6.-.-.-</ecNumber>
    </recommendedName>
    <alternativeName>
        <fullName evidence="12">Tubulin--tyrosine ligase-like protein 11</fullName>
    </alternativeName>
</protein>
<keyword id="KW-0025">Alternative splicing</keyword>
<keyword id="KW-0067">ATP-binding</keyword>
<keyword id="KW-0966">Cell projection</keyword>
<keyword id="KW-0436">Ligase</keyword>
<keyword id="KW-0547">Nucleotide-binding</keyword>
<keyword id="KW-1185">Reference proteome</keyword>
<evidence type="ECO:0000250" key="1">
    <source>
        <dbReference type="UniProtKB" id="Q6ZT98"/>
    </source>
</evidence>
<evidence type="ECO:0000255" key="2">
    <source>
        <dbReference type="PROSITE-ProRule" id="PRU00568"/>
    </source>
</evidence>
<evidence type="ECO:0000256" key="3">
    <source>
        <dbReference type="SAM" id="MobiDB-lite"/>
    </source>
</evidence>
<evidence type="ECO:0000269" key="4">
    <source>
    </source>
</evidence>
<evidence type="ECO:0000269" key="5">
    <source>
    </source>
</evidence>
<evidence type="ECO:0000269" key="6">
    <source>
    </source>
</evidence>
<evidence type="ECO:0000305" key="7"/>
<evidence type="ECO:0000305" key="8">
    <source>
    </source>
</evidence>
<evidence type="ECO:0000305" key="9">
    <source>
    </source>
</evidence>
<evidence type="ECO:0000312" key="10">
    <source>
        <dbReference type="Proteomes" id="UP000001940"/>
    </source>
</evidence>
<evidence type="ECO:0000312" key="11">
    <source>
        <dbReference type="WormBase" id="H23L24.3a"/>
    </source>
</evidence>
<evidence type="ECO:0000312" key="12">
    <source>
        <dbReference type="WormBase" id="H23L24.3b"/>
    </source>
</evidence>
<gene>
    <name evidence="12" type="primary">ttll-11</name>
    <name evidence="12" type="ORF">H23L24.3</name>
</gene>
<organism evidence="10">
    <name type="scientific">Caenorhabditis elegans</name>
    <dbReference type="NCBI Taxonomy" id="6239"/>
    <lineage>
        <taxon>Eukaryota</taxon>
        <taxon>Metazoa</taxon>
        <taxon>Ecdysozoa</taxon>
        <taxon>Nematoda</taxon>
        <taxon>Chromadorea</taxon>
        <taxon>Rhabditida</taxon>
        <taxon>Rhabditina</taxon>
        <taxon>Rhabditomorpha</taxon>
        <taxon>Rhabditoidea</taxon>
        <taxon>Rhabditidae</taxon>
        <taxon>Peloderinae</taxon>
        <taxon>Caenorhabditis</taxon>
    </lineage>
</organism>